<protein>
    <recommendedName>
        <fullName>Sulfhydrogenase 2 subunit delta</fullName>
        <ecNumber>1.12.1.5</ecNumber>
    </recommendedName>
    <alternativeName>
        <fullName>Hydrogen dehydrogenase (NAD(P)(+))</fullName>
    </alternativeName>
    <alternativeName>
        <fullName evidence="6">Hydrogenase-II subunit delta</fullName>
        <shortName evidence="6">H-II delta</shortName>
    </alternativeName>
    <alternativeName>
        <fullName>NADP-reducing hydrogenase subunit ShyD</fullName>
    </alternativeName>
    <alternativeName>
        <fullName evidence="6">Sulfhydrogenase II subunit delta</fullName>
    </alternativeName>
</protein>
<proteinExistence type="evidence at protein level"/>
<feature type="chain" id="PRO_0000420726" description="Sulfhydrogenase 2 subunit delta">
    <location>
        <begin position="1"/>
        <end position="237"/>
    </location>
</feature>
<feature type="binding site" evidence="1">
    <location>
        <position position="11"/>
    </location>
    <ligand>
        <name>[4Fe-4S] cluster</name>
        <dbReference type="ChEBI" id="CHEBI:49883"/>
        <label>1</label>
    </ligand>
</feature>
<feature type="binding site" evidence="1">
    <location>
        <position position="14"/>
    </location>
    <ligand>
        <name>[4Fe-4S] cluster</name>
        <dbReference type="ChEBI" id="CHEBI:49883"/>
        <label>1</label>
    </ligand>
</feature>
<feature type="binding site" evidence="1">
    <location>
        <position position="83"/>
    </location>
    <ligand>
        <name>[4Fe-4S] cluster</name>
        <dbReference type="ChEBI" id="CHEBI:49883"/>
        <label>1</label>
    </ligand>
</feature>
<feature type="binding site" evidence="1">
    <location>
        <position position="132"/>
    </location>
    <ligand>
        <name>[4Fe-4S] cluster</name>
        <dbReference type="ChEBI" id="CHEBI:49883"/>
        <label>1</label>
    </ligand>
</feature>
<feature type="binding site" evidence="1">
    <location>
        <position position="160"/>
    </location>
    <ligand>
        <name>[4Fe-4S] cluster</name>
        <dbReference type="ChEBI" id="CHEBI:49883"/>
        <label>2</label>
    </ligand>
</feature>
<feature type="binding site" evidence="1">
    <location>
        <position position="163"/>
    </location>
    <ligand>
        <name>[4Fe-4S] cluster</name>
        <dbReference type="ChEBI" id="CHEBI:49883"/>
        <label>2</label>
    </ligand>
</feature>
<feature type="binding site" evidence="1">
    <location>
        <position position="170"/>
    </location>
    <ligand>
        <name>[4Fe-4S] cluster</name>
        <dbReference type="ChEBI" id="CHEBI:49883"/>
        <label>2</label>
    </ligand>
</feature>
<feature type="binding site" evidence="1">
    <location>
        <position position="179"/>
    </location>
    <ligand>
        <name>[4Fe-4S] cluster</name>
        <dbReference type="ChEBI" id="CHEBI:49883"/>
        <label>2</label>
    </ligand>
</feature>
<feature type="binding site" evidence="1">
    <location>
        <position position="188"/>
    </location>
    <ligand>
        <name>[3Fe-4S] cluster</name>
        <dbReference type="ChEBI" id="CHEBI:21137"/>
    </ligand>
</feature>
<feature type="binding site" evidence="1">
    <location>
        <position position="192"/>
    </location>
    <ligand>
        <name>[3Fe-4S] cluster</name>
        <dbReference type="ChEBI" id="CHEBI:21137"/>
    </ligand>
</feature>
<feature type="binding site" evidence="1">
    <location>
        <position position="199"/>
    </location>
    <ligand>
        <name>[3Fe-4S] cluster</name>
        <dbReference type="ChEBI" id="CHEBI:21137"/>
    </ligand>
</feature>
<feature type="binding site" evidence="1">
    <location>
        <position position="202"/>
    </location>
    <ligand>
        <name>[3Fe-4S] cluster</name>
        <dbReference type="ChEBI" id="CHEBI:21137"/>
    </ligand>
</feature>
<evidence type="ECO:0000250" key="1">
    <source>
        <dbReference type="UniProtKB" id="P21853"/>
    </source>
</evidence>
<evidence type="ECO:0000255" key="2"/>
<evidence type="ECO:0000269" key="3">
    <source>
    </source>
</evidence>
<evidence type="ECO:0000269" key="4">
    <source>
    </source>
</evidence>
<evidence type="ECO:0000269" key="5">
    <source>
    </source>
</evidence>
<evidence type="ECO:0000303" key="6">
    <source>
    </source>
</evidence>
<evidence type="ECO:0000305" key="7"/>
<evidence type="ECO:0000312" key="8">
    <source>
        <dbReference type="EMBL" id="AAF61853.1"/>
    </source>
</evidence>
<evidence type="ECO:0000312" key="9">
    <source>
        <dbReference type="EMBL" id="AAL81455.1"/>
    </source>
</evidence>
<reference evidence="7 8" key="1">
    <citation type="journal article" date="2000" name="J. Bacteriol.">
        <title>Characterization of hydrogenase II from the hyperthermophilic archaeon Pyrococcus furiosus and assessment of its role in sulfur reduction.</title>
        <authorList>
            <person name="Ma K."/>
            <person name="Weiss R."/>
            <person name="Adams M.W."/>
        </authorList>
    </citation>
    <scope>NUCLEOTIDE SEQUENCE [GENOMIC DNA]</scope>
    <scope>PROTEIN SEQUENCE OF 1-13</scope>
    <scope>FUNCTION</scope>
    <scope>CATALYTIC ACTIVITY</scope>
    <scope>COFACTOR</scope>
    <scope>BIOPHYSICOCHEMICAL PROPERTIES</scope>
    <scope>SUBCELLULAR LOCATION</scope>
    <scope>SUBUNIT</scope>
    <scope>EPR SPECTROSCOPY</scope>
    <source>
        <strain evidence="8">ATCC 43587 / DSM 3638 / JCM 8422 / Vc1</strain>
    </source>
</reference>
<reference evidence="9" key="2">
    <citation type="journal article" date="1999" name="Genetics">
        <title>Divergence of the hyperthermophilic archaea Pyrococcus furiosus and P. horikoshii inferred from complete genomic sequences.</title>
        <authorList>
            <person name="Maeder D.L."/>
            <person name="Weiss R.B."/>
            <person name="Dunn D.M."/>
            <person name="Cherry J.L."/>
            <person name="Gonzalez J.M."/>
            <person name="DiRuggiero J."/>
            <person name="Robb F.T."/>
        </authorList>
    </citation>
    <scope>NUCLEOTIDE SEQUENCE [LARGE SCALE GENOMIC DNA]</scope>
    <source>
        <strain>ATCC 43587 / DSM 3638 / JCM 8422 / Vc1</strain>
    </source>
</reference>
<reference evidence="7" key="3">
    <citation type="journal article" date="2001" name="J. Bacteriol.">
        <title>Key role for sulfur in peptide metabolism and in regulation of three hydrogenases in the hyperthermophilic archaeon Pyrococcus furiosus.</title>
        <authorList>
            <person name="Adams M.W."/>
            <person name="Holden J.F."/>
            <person name="Menon A.L."/>
            <person name="Schut G.J."/>
            <person name="Grunden A.M."/>
            <person name="Hou C."/>
            <person name="Hutchins A.M."/>
            <person name="Jenney F.E. Jr."/>
            <person name="Kim C."/>
            <person name="Ma K."/>
            <person name="Pan G."/>
            <person name="Roy R."/>
            <person name="Sapra R."/>
            <person name="Story S.V."/>
            <person name="Verhagen M.F."/>
        </authorList>
    </citation>
    <scope>FUNCTION</scope>
    <source>
        <strain evidence="4">ATCC 43587 / DSM 3638 / JCM 8422 / Vc1</strain>
    </source>
</reference>
<reference evidence="7" key="4">
    <citation type="journal article" date="2001" name="Methods Enzymol.">
        <title>Hydrogenases I and II from Pyrococcus furiosus.</title>
        <authorList>
            <person name="Ma K."/>
            <person name="Adams M.W."/>
        </authorList>
    </citation>
    <scope>FUNCTION</scope>
    <scope>CATALYTIC ACTIVITY</scope>
    <scope>SUBUNIT</scope>
    <source>
        <strain evidence="5">ATCC 43587 / DSM 3638 / JCM 8422 / Vc1</strain>
    </source>
</reference>
<gene>
    <name evidence="8" type="primary">shyD</name>
    <name type="ordered locus">PF1331</name>
</gene>
<organism>
    <name type="scientific">Pyrococcus furiosus (strain ATCC 43587 / DSM 3638 / JCM 8422 / Vc1)</name>
    <dbReference type="NCBI Taxonomy" id="186497"/>
    <lineage>
        <taxon>Archaea</taxon>
        <taxon>Methanobacteriati</taxon>
        <taxon>Methanobacteriota</taxon>
        <taxon>Thermococci</taxon>
        <taxon>Thermococcales</taxon>
        <taxon>Thermococcaceae</taxon>
        <taxon>Pyrococcus</taxon>
    </lineage>
</organism>
<name>HYD2D_PYRFU</name>
<comment type="function">
    <text evidence="3 4 5">Part of a bifunctional enzyme complex that functions as a hydrogen-evolving hydrogenase with sulfur-reducing activity. May play a role in hydrogen cycling during fermentative growth. Activity exhibited with NAD in addition to NADPH. The alpha and delta subunits form the hydrogenase component that catalyzes the reduction of protons to evolve hydrogen.</text>
</comment>
<comment type="catalytic activity">
    <reaction evidence="3 5">
        <text>H2 + NADP(+) = NADPH + H(+)</text>
        <dbReference type="Rhea" id="RHEA:18637"/>
        <dbReference type="ChEBI" id="CHEBI:15378"/>
        <dbReference type="ChEBI" id="CHEBI:18276"/>
        <dbReference type="ChEBI" id="CHEBI:57783"/>
        <dbReference type="ChEBI" id="CHEBI:58349"/>
        <dbReference type="EC" id="1.12.1.5"/>
    </reaction>
</comment>
<comment type="catalytic activity">
    <reaction evidence="3 5">
        <text>H2 + NAD(+) = NADH + H(+)</text>
        <dbReference type="Rhea" id="RHEA:24636"/>
        <dbReference type="ChEBI" id="CHEBI:15378"/>
        <dbReference type="ChEBI" id="CHEBI:18276"/>
        <dbReference type="ChEBI" id="CHEBI:57540"/>
        <dbReference type="ChEBI" id="CHEBI:57945"/>
        <dbReference type="EC" id="1.12.1.5"/>
    </reaction>
</comment>
<comment type="cofactor">
    <cofactor evidence="3">
        <name>Ni(2+)</name>
        <dbReference type="ChEBI" id="CHEBI:49786"/>
    </cofactor>
    <text evidence="3">Binds 1 nickel ion per subunit.</text>
</comment>
<comment type="cofactor">
    <cofactor evidence="3">
        <name>[4Fe-4S] cluster</name>
        <dbReference type="ChEBI" id="CHEBI:49883"/>
    </cofactor>
    <text evidence="3">Binds 2 [4Fe-4S] clusters.</text>
</comment>
<comment type="cofactor">
    <cofactor evidence="3">
        <name>[3Fe-4S] cluster</name>
        <dbReference type="ChEBI" id="CHEBI:21137"/>
    </cofactor>
    <text evidence="3">Binds 1 [3Fe-4S] cluster.</text>
</comment>
<comment type="biophysicochemical properties">
    <kinetics>
        <KM evidence="3">1.25 mM for methyl viologen (sodium dithionate and H(+) as cosubstrates)</KM>
        <KM evidence="3">1 mM for methyl viologen (H(2) as cosubstrate)</KM>
        <KM evidence="3">0.13 mM for H(2) (methyl viologen as cosubstrate)</KM>
        <KM evidence="3">63 uM for NADPH (H(+) as cosubstrate)</KM>
        <KM evidence="3">71 uM for NADH (H(+) as cosubstrate)</KM>
        <KM evidence="3">17 uM for NADP (H(2) as cosubstrate)</KM>
        <KM evidence="3">125 uM for NAD (H(2) as cosubstrate)</KM>
        <KM evidence="3">0.2 mM for sulfur (H(2) as cosubstrate)</KM>
        <KM evidence="3">0.67 mM for polysulfide (NADPH as cosubstrate)</KM>
        <text evidence="3">Measured for the whole complex.</text>
    </kinetics>
    <phDependence>
        <text evidence="3">Optimum pH is 8 for hydrogenase activity at &gt;95 degrees Celsius.</text>
    </phDependence>
    <temperatureDependence>
        <text evidence="3">Optimum temperature is greater than 90 degrees Celsius. Activity increases with increasing temperature from 30 degrees Celsius to 90 degrees Celsius. Has a half-life of 6 hours at 95 degrees Celsius.</text>
    </temperatureDependence>
</comment>
<comment type="subunit">
    <text evidence="3 5">Dimer of heterotetramer of alpha, beta, gamma and delta subunits. The nickel-containing alpha and delta subunits constitute the hydrogenase activity. The beta and gamma subunits (flavin-containing dimer) constitute the sulfur reductase activity.</text>
</comment>
<comment type="subcellular location">
    <subcellularLocation>
        <location evidence="3">Cytoplasm</location>
    </subcellularLocation>
</comment>
<comment type="similarity">
    <text evidence="2">Belongs to the [NiFe]/[NiFeSe] hydrogenase small subunit family.</text>
</comment>
<accession>E7FHF8</accession>
<accession>Q7LWY7</accession>
<accession>Q9P9M5</accession>
<sequence length="237" mass="26285">MKLGVFELTDCGGCALNLLFLYDKLLDLLEFYEIAEFHMATSKKSREKIDVALVTGTVSTQRDLEVLRDARNRSEYLIALGTCATHGSVQGVIENSKEAYRRVYGNGKPPVKLLNPKPVTDYVPVDFAIPGCPYDKEEVFQVLIDIAKGIEPVAKDYPVCLECKLNEYECVLLKKRIPCLGPVTAGGCNAKCPSYGLGCIGCRGPSLDNNVPGMFEVLKEILPDEEIARKLRTFARW</sequence>
<dbReference type="EC" id="1.12.1.5"/>
<dbReference type="EMBL" id="AF176650">
    <property type="protein sequence ID" value="AAF61853.1"/>
    <property type="molecule type" value="Genomic_DNA"/>
</dbReference>
<dbReference type="EMBL" id="AE009950">
    <property type="protein sequence ID" value="AAL81455.1"/>
    <property type="molecule type" value="Genomic_DNA"/>
</dbReference>
<dbReference type="RefSeq" id="WP_011012477.1">
    <property type="nucleotide sequence ID" value="NZ_CP023154.1"/>
</dbReference>
<dbReference type="SMR" id="E7FHF8"/>
<dbReference type="STRING" id="186497.PF1331"/>
<dbReference type="PaxDb" id="186497-PF1331"/>
<dbReference type="GeneID" id="41713134"/>
<dbReference type="KEGG" id="pfu:PF1331"/>
<dbReference type="PATRIC" id="fig|186497.12.peg.1394"/>
<dbReference type="eggNOG" id="arCOG02472">
    <property type="taxonomic scope" value="Archaea"/>
</dbReference>
<dbReference type="HOGENOM" id="CLU_053270_0_0_2"/>
<dbReference type="OrthoDB" id="37913at2157"/>
<dbReference type="PhylomeDB" id="E7FHF8"/>
<dbReference type="BioCyc" id="MetaCyc:MONOMER-17853"/>
<dbReference type="BRENDA" id="1.12.1.5">
    <property type="organism ID" value="5243"/>
</dbReference>
<dbReference type="BRENDA" id="1.12.98.4">
    <property type="organism ID" value="5243"/>
</dbReference>
<dbReference type="Proteomes" id="UP000001013">
    <property type="component" value="Chromosome"/>
</dbReference>
<dbReference type="GO" id="GO:0005737">
    <property type="term" value="C:cytoplasm"/>
    <property type="evidence" value="ECO:0007669"/>
    <property type="project" value="UniProtKB-SubCell"/>
</dbReference>
<dbReference type="GO" id="GO:0051538">
    <property type="term" value="F:3 iron, 4 sulfur cluster binding"/>
    <property type="evidence" value="ECO:0007669"/>
    <property type="project" value="UniProtKB-KW"/>
</dbReference>
<dbReference type="GO" id="GO:0051539">
    <property type="term" value="F:4 iron, 4 sulfur cluster binding"/>
    <property type="evidence" value="ECO:0007669"/>
    <property type="project" value="UniProtKB-KW"/>
</dbReference>
<dbReference type="GO" id="GO:0050583">
    <property type="term" value="F:hydrogen dehydrogenase (NADP+) activity"/>
    <property type="evidence" value="ECO:0007669"/>
    <property type="project" value="RHEA"/>
</dbReference>
<dbReference type="GO" id="GO:0047985">
    <property type="term" value="F:hydrogen dehydrogenase activity"/>
    <property type="evidence" value="ECO:0007669"/>
    <property type="project" value="RHEA"/>
</dbReference>
<dbReference type="GO" id="GO:0046872">
    <property type="term" value="F:metal ion binding"/>
    <property type="evidence" value="ECO:0007669"/>
    <property type="project" value="UniProtKB-KW"/>
</dbReference>
<dbReference type="Gene3D" id="3.40.50.700">
    <property type="entry name" value="NADH:ubiquinone oxidoreductase-like, 20kDa subunit"/>
    <property type="match status" value="1"/>
</dbReference>
<dbReference type="InterPro" id="IPR051349">
    <property type="entry name" value="Hydrogenase_assoc-protein"/>
</dbReference>
<dbReference type="InterPro" id="IPR053638">
    <property type="entry name" value="Hydrogenase_Small_Subunit-like"/>
</dbReference>
<dbReference type="InterPro" id="IPR006137">
    <property type="entry name" value="NADH_UbQ_OxRdtase-like_20kDa"/>
</dbReference>
<dbReference type="InterPro" id="IPR037024">
    <property type="entry name" value="NiFe_Hase_small_N_sf"/>
</dbReference>
<dbReference type="NCBIfam" id="NF040831">
    <property type="entry name" value="sulfhyd_ShyD"/>
    <property type="match status" value="1"/>
</dbReference>
<dbReference type="PANTHER" id="PTHR42845">
    <property type="entry name" value="COENZYME F420-REDUCING HYDROGENASE, GAMMA SUBUNIT"/>
    <property type="match status" value="1"/>
</dbReference>
<dbReference type="PANTHER" id="PTHR42845:SF3">
    <property type="entry name" value="CYTOSOLIC NIFE-HYDROGENASE, DELTA SUBUNIT"/>
    <property type="match status" value="1"/>
</dbReference>
<dbReference type="Pfam" id="PF01058">
    <property type="entry name" value="Oxidored_q6"/>
    <property type="match status" value="1"/>
</dbReference>
<dbReference type="SUPFAM" id="SSF56770">
    <property type="entry name" value="HydA/Nqo6-like"/>
    <property type="match status" value="1"/>
</dbReference>
<keyword id="KW-0003">3Fe-4S</keyword>
<keyword id="KW-0004">4Fe-4S</keyword>
<keyword id="KW-0963">Cytoplasm</keyword>
<keyword id="KW-0903">Direct protein sequencing</keyword>
<keyword id="KW-0408">Iron</keyword>
<keyword id="KW-0411">Iron-sulfur</keyword>
<keyword id="KW-0479">Metal-binding</keyword>
<keyword id="KW-0520">NAD</keyword>
<keyword id="KW-0521">NADP</keyword>
<keyword id="KW-0533">Nickel</keyword>
<keyword id="KW-0560">Oxidoreductase</keyword>
<keyword id="KW-1185">Reference proteome</keyword>